<feature type="chain" id="PRO_0000360300" description="NAD(P)H-quinone oxidoreductase subunit 4L, chloroplastic">
    <location>
        <begin position="1"/>
        <end position="101"/>
    </location>
</feature>
<feature type="transmembrane region" description="Helical" evidence="1">
    <location>
        <begin position="2"/>
        <end position="22"/>
    </location>
</feature>
<feature type="transmembrane region" description="Helical" evidence="1">
    <location>
        <begin position="32"/>
        <end position="52"/>
    </location>
</feature>
<feature type="transmembrane region" description="Helical" evidence="1">
    <location>
        <begin position="61"/>
        <end position="81"/>
    </location>
</feature>
<reference key="1">
    <citation type="submission" date="2007-03" db="EMBL/GenBank/DDBJ databases">
        <title>Sequencing analysis of Aethionema coridifolium chloroplast DNA.</title>
        <authorList>
            <person name="Hosouchi T."/>
            <person name="Tsuruoka H."/>
            <person name="Kotani H."/>
        </authorList>
    </citation>
    <scope>NUCLEOTIDE SEQUENCE [LARGE SCALE GENOMIC DNA]</scope>
</reference>
<keyword id="KW-0150">Chloroplast</keyword>
<keyword id="KW-0472">Membrane</keyword>
<keyword id="KW-0520">NAD</keyword>
<keyword id="KW-0521">NADP</keyword>
<keyword id="KW-0934">Plastid</keyword>
<keyword id="KW-0618">Plastoquinone</keyword>
<keyword id="KW-0874">Quinone</keyword>
<keyword id="KW-0793">Thylakoid</keyword>
<keyword id="KW-1278">Translocase</keyword>
<keyword id="KW-0812">Transmembrane</keyword>
<keyword id="KW-1133">Transmembrane helix</keyword>
<keyword id="KW-0813">Transport</keyword>
<comment type="function">
    <text evidence="1">NDH shuttles electrons from NAD(P)H:plastoquinone, via FMN and iron-sulfur (Fe-S) centers, to quinones in the photosynthetic chain and possibly in a chloroplast respiratory chain. The immediate electron acceptor for the enzyme in this species is believed to be plastoquinone. Couples the redox reaction to proton translocation, and thus conserves the redox energy in a proton gradient.</text>
</comment>
<comment type="catalytic activity">
    <reaction evidence="1">
        <text>a plastoquinone + NADH + (n+1) H(+)(in) = a plastoquinol + NAD(+) + n H(+)(out)</text>
        <dbReference type="Rhea" id="RHEA:42608"/>
        <dbReference type="Rhea" id="RHEA-COMP:9561"/>
        <dbReference type="Rhea" id="RHEA-COMP:9562"/>
        <dbReference type="ChEBI" id="CHEBI:15378"/>
        <dbReference type="ChEBI" id="CHEBI:17757"/>
        <dbReference type="ChEBI" id="CHEBI:57540"/>
        <dbReference type="ChEBI" id="CHEBI:57945"/>
        <dbReference type="ChEBI" id="CHEBI:62192"/>
    </reaction>
</comment>
<comment type="catalytic activity">
    <reaction evidence="1">
        <text>a plastoquinone + NADPH + (n+1) H(+)(in) = a plastoquinol + NADP(+) + n H(+)(out)</text>
        <dbReference type="Rhea" id="RHEA:42612"/>
        <dbReference type="Rhea" id="RHEA-COMP:9561"/>
        <dbReference type="Rhea" id="RHEA-COMP:9562"/>
        <dbReference type="ChEBI" id="CHEBI:15378"/>
        <dbReference type="ChEBI" id="CHEBI:17757"/>
        <dbReference type="ChEBI" id="CHEBI:57783"/>
        <dbReference type="ChEBI" id="CHEBI:58349"/>
        <dbReference type="ChEBI" id="CHEBI:62192"/>
    </reaction>
</comment>
<comment type="subunit">
    <text evidence="1">NDH is composed of at least 16 different subunits, 5 of which are encoded in the nucleus.</text>
</comment>
<comment type="subcellular location">
    <subcellularLocation>
        <location evidence="1">Plastid</location>
        <location evidence="1">Chloroplast thylakoid membrane</location>
        <topology evidence="1">Multi-pass membrane protein</topology>
    </subcellularLocation>
</comment>
<comment type="similarity">
    <text evidence="1">Belongs to the complex I subunit 4L family.</text>
</comment>
<sequence>MILEHVLVLSAYLFFIGLYGLITSRNMVRALMCLELILNAVNMNFVTFSDFFDNSQLKGDIFCIFVIAIAAAEAAIGLAIVSSIYRNRKSTRINQSTLLNK</sequence>
<accession>A4QJG8</accession>
<name>NU4LC_AETCO</name>
<organism>
    <name type="scientific">Aethionema cordifolium</name>
    <name type="common">Lebanon stonecress</name>
    <dbReference type="NCBI Taxonomy" id="434059"/>
    <lineage>
        <taxon>Eukaryota</taxon>
        <taxon>Viridiplantae</taxon>
        <taxon>Streptophyta</taxon>
        <taxon>Embryophyta</taxon>
        <taxon>Tracheophyta</taxon>
        <taxon>Spermatophyta</taxon>
        <taxon>Magnoliopsida</taxon>
        <taxon>eudicotyledons</taxon>
        <taxon>Gunneridae</taxon>
        <taxon>Pentapetalae</taxon>
        <taxon>rosids</taxon>
        <taxon>malvids</taxon>
        <taxon>Brassicales</taxon>
        <taxon>Brassicaceae</taxon>
        <taxon>Aethionemeae</taxon>
        <taxon>Aethionema</taxon>
    </lineage>
</organism>
<dbReference type="EC" id="7.1.1.-" evidence="1"/>
<dbReference type="EMBL" id="AP009366">
    <property type="protein sequence ID" value="BAF49823.1"/>
    <property type="molecule type" value="Genomic_DNA"/>
</dbReference>
<dbReference type="RefSeq" id="YP_001122998.1">
    <property type="nucleotide sequence ID" value="NC_009265.1"/>
</dbReference>
<dbReference type="SMR" id="A4QJG8"/>
<dbReference type="GeneID" id="4968588"/>
<dbReference type="GO" id="GO:0009535">
    <property type="term" value="C:chloroplast thylakoid membrane"/>
    <property type="evidence" value="ECO:0007669"/>
    <property type="project" value="UniProtKB-SubCell"/>
</dbReference>
<dbReference type="GO" id="GO:0030964">
    <property type="term" value="C:NADH dehydrogenase complex"/>
    <property type="evidence" value="ECO:0007669"/>
    <property type="project" value="TreeGrafter"/>
</dbReference>
<dbReference type="GO" id="GO:0016655">
    <property type="term" value="F:oxidoreductase activity, acting on NAD(P)H, quinone or similar compound as acceptor"/>
    <property type="evidence" value="ECO:0007669"/>
    <property type="project" value="UniProtKB-UniRule"/>
</dbReference>
<dbReference type="GO" id="GO:0048038">
    <property type="term" value="F:quinone binding"/>
    <property type="evidence" value="ECO:0007669"/>
    <property type="project" value="UniProtKB-KW"/>
</dbReference>
<dbReference type="GO" id="GO:0042773">
    <property type="term" value="P:ATP synthesis coupled electron transport"/>
    <property type="evidence" value="ECO:0007669"/>
    <property type="project" value="InterPro"/>
</dbReference>
<dbReference type="GO" id="GO:0019684">
    <property type="term" value="P:photosynthesis, light reaction"/>
    <property type="evidence" value="ECO:0007669"/>
    <property type="project" value="UniProtKB-UniRule"/>
</dbReference>
<dbReference type="FunFam" id="1.10.287.3510:FF:000001">
    <property type="entry name" value="NADH-quinone oxidoreductase subunit K"/>
    <property type="match status" value="1"/>
</dbReference>
<dbReference type="Gene3D" id="1.10.287.3510">
    <property type="match status" value="1"/>
</dbReference>
<dbReference type="HAMAP" id="MF_01456">
    <property type="entry name" value="NDH1_NuoK"/>
    <property type="match status" value="1"/>
</dbReference>
<dbReference type="InterPro" id="IPR001133">
    <property type="entry name" value="NADH_UbQ_OxRdtase_chain4L/K"/>
</dbReference>
<dbReference type="InterPro" id="IPR039428">
    <property type="entry name" value="NUOK/Mnh_C1-like"/>
</dbReference>
<dbReference type="NCBIfam" id="NF004320">
    <property type="entry name" value="PRK05715.1-2"/>
    <property type="match status" value="1"/>
</dbReference>
<dbReference type="NCBIfam" id="NF004322">
    <property type="entry name" value="PRK05715.1-4"/>
    <property type="match status" value="1"/>
</dbReference>
<dbReference type="PANTHER" id="PTHR11434:SF16">
    <property type="entry name" value="NADH-UBIQUINONE OXIDOREDUCTASE CHAIN 4L"/>
    <property type="match status" value="1"/>
</dbReference>
<dbReference type="PANTHER" id="PTHR11434">
    <property type="entry name" value="NADH-UBIQUINONE OXIDOREDUCTASE SUBUNIT ND4L"/>
    <property type="match status" value="1"/>
</dbReference>
<dbReference type="Pfam" id="PF00420">
    <property type="entry name" value="Oxidored_q2"/>
    <property type="match status" value="1"/>
</dbReference>
<gene>
    <name evidence="1" type="primary">ndhE</name>
</gene>
<evidence type="ECO:0000255" key="1">
    <source>
        <dbReference type="HAMAP-Rule" id="MF_01456"/>
    </source>
</evidence>
<geneLocation type="chloroplast"/>
<protein>
    <recommendedName>
        <fullName evidence="1">NAD(P)H-quinone oxidoreductase subunit 4L, chloroplastic</fullName>
        <ecNumber evidence="1">7.1.1.-</ecNumber>
    </recommendedName>
    <alternativeName>
        <fullName evidence="1">NAD(P)H dehydrogenase subunit 4L</fullName>
    </alternativeName>
    <alternativeName>
        <fullName evidence="1">NADH-plastoquinone oxidoreductase subunit 4L</fullName>
    </alternativeName>
</protein>
<proteinExistence type="inferred from homology"/>